<sequence length="104" mass="11200">MFAVIRTGGKQYRVVPDAVLKVEKLEAEAGSTVTFTDVLAIGGEQGVTLGKPVVEGATVTATVIAQDKLDTVIIFKKRRRQNSRRKNGHRQPVTVLRVSGINAA</sequence>
<organism>
    <name type="scientific">Acidiphilium cryptum (strain JF-5)</name>
    <dbReference type="NCBI Taxonomy" id="349163"/>
    <lineage>
        <taxon>Bacteria</taxon>
        <taxon>Pseudomonadati</taxon>
        <taxon>Pseudomonadota</taxon>
        <taxon>Alphaproteobacteria</taxon>
        <taxon>Acetobacterales</taxon>
        <taxon>Acidocellaceae</taxon>
        <taxon>Acidiphilium</taxon>
    </lineage>
</organism>
<keyword id="KW-1185">Reference proteome</keyword>
<keyword id="KW-0687">Ribonucleoprotein</keyword>
<keyword id="KW-0689">Ribosomal protein</keyword>
<keyword id="KW-0694">RNA-binding</keyword>
<keyword id="KW-0699">rRNA-binding</keyword>
<comment type="function">
    <text evidence="1">This protein binds to 23S rRNA in the presence of protein L20.</text>
</comment>
<comment type="subunit">
    <text evidence="1">Part of the 50S ribosomal subunit. Contacts protein L20.</text>
</comment>
<comment type="similarity">
    <text evidence="1">Belongs to the bacterial ribosomal protein bL21 family.</text>
</comment>
<gene>
    <name evidence="1" type="primary">rplU</name>
    <name type="ordered locus">Acry_0231</name>
</gene>
<protein>
    <recommendedName>
        <fullName evidence="1">Large ribosomal subunit protein bL21</fullName>
    </recommendedName>
    <alternativeName>
        <fullName evidence="2">50S ribosomal protein L21</fullName>
    </alternativeName>
</protein>
<reference key="1">
    <citation type="submission" date="2007-05" db="EMBL/GenBank/DDBJ databases">
        <title>Complete sequence of chromosome of Acidiphilium cryptum JF-5.</title>
        <authorList>
            <consortium name="US DOE Joint Genome Institute"/>
            <person name="Copeland A."/>
            <person name="Lucas S."/>
            <person name="Lapidus A."/>
            <person name="Barry K."/>
            <person name="Detter J.C."/>
            <person name="Glavina del Rio T."/>
            <person name="Hammon N."/>
            <person name="Israni S."/>
            <person name="Dalin E."/>
            <person name="Tice H."/>
            <person name="Pitluck S."/>
            <person name="Sims D."/>
            <person name="Brettin T."/>
            <person name="Bruce D."/>
            <person name="Han C."/>
            <person name="Schmutz J."/>
            <person name="Larimer F."/>
            <person name="Land M."/>
            <person name="Hauser L."/>
            <person name="Kyrpides N."/>
            <person name="Kim E."/>
            <person name="Magnuson T."/>
            <person name="Richardson P."/>
        </authorList>
    </citation>
    <scope>NUCLEOTIDE SEQUENCE [LARGE SCALE GENOMIC DNA]</scope>
    <source>
        <strain>JF-5</strain>
    </source>
</reference>
<evidence type="ECO:0000255" key="1">
    <source>
        <dbReference type="HAMAP-Rule" id="MF_01363"/>
    </source>
</evidence>
<evidence type="ECO:0000305" key="2"/>
<accession>A5FV27</accession>
<dbReference type="EMBL" id="CP000697">
    <property type="protein sequence ID" value="ABQ29459.1"/>
    <property type="molecule type" value="Genomic_DNA"/>
</dbReference>
<dbReference type="RefSeq" id="WP_007422159.1">
    <property type="nucleotide sequence ID" value="NC_009484.1"/>
</dbReference>
<dbReference type="SMR" id="A5FV27"/>
<dbReference type="STRING" id="349163.Acry_0231"/>
<dbReference type="KEGG" id="acr:Acry_0231"/>
<dbReference type="eggNOG" id="COG0261">
    <property type="taxonomic scope" value="Bacteria"/>
</dbReference>
<dbReference type="HOGENOM" id="CLU_061463_3_2_5"/>
<dbReference type="Proteomes" id="UP000000245">
    <property type="component" value="Chromosome"/>
</dbReference>
<dbReference type="GO" id="GO:0005737">
    <property type="term" value="C:cytoplasm"/>
    <property type="evidence" value="ECO:0007669"/>
    <property type="project" value="UniProtKB-ARBA"/>
</dbReference>
<dbReference type="GO" id="GO:1990904">
    <property type="term" value="C:ribonucleoprotein complex"/>
    <property type="evidence" value="ECO:0007669"/>
    <property type="project" value="UniProtKB-KW"/>
</dbReference>
<dbReference type="GO" id="GO:0005840">
    <property type="term" value="C:ribosome"/>
    <property type="evidence" value="ECO:0007669"/>
    <property type="project" value="UniProtKB-KW"/>
</dbReference>
<dbReference type="GO" id="GO:0019843">
    <property type="term" value="F:rRNA binding"/>
    <property type="evidence" value="ECO:0007669"/>
    <property type="project" value="UniProtKB-UniRule"/>
</dbReference>
<dbReference type="GO" id="GO:0003735">
    <property type="term" value="F:structural constituent of ribosome"/>
    <property type="evidence" value="ECO:0007669"/>
    <property type="project" value="InterPro"/>
</dbReference>
<dbReference type="GO" id="GO:0006412">
    <property type="term" value="P:translation"/>
    <property type="evidence" value="ECO:0007669"/>
    <property type="project" value="UniProtKB-UniRule"/>
</dbReference>
<dbReference type="HAMAP" id="MF_01363">
    <property type="entry name" value="Ribosomal_bL21"/>
    <property type="match status" value="1"/>
</dbReference>
<dbReference type="InterPro" id="IPR028909">
    <property type="entry name" value="bL21-like"/>
</dbReference>
<dbReference type="InterPro" id="IPR036164">
    <property type="entry name" value="bL21-like_sf"/>
</dbReference>
<dbReference type="InterPro" id="IPR001787">
    <property type="entry name" value="Ribosomal_bL21"/>
</dbReference>
<dbReference type="NCBIfam" id="TIGR00061">
    <property type="entry name" value="L21"/>
    <property type="match status" value="1"/>
</dbReference>
<dbReference type="PANTHER" id="PTHR21349">
    <property type="entry name" value="50S RIBOSOMAL PROTEIN L21"/>
    <property type="match status" value="1"/>
</dbReference>
<dbReference type="PANTHER" id="PTHR21349:SF0">
    <property type="entry name" value="LARGE RIBOSOMAL SUBUNIT PROTEIN BL21M"/>
    <property type="match status" value="1"/>
</dbReference>
<dbReference type="Pfam" id="PF00829">
    <property type="entry name" value="Ribosomal_L21p"/>
    <property type="match status" value="1"/>
</dbReference>
<dbReference type="SUPFAM" id="SSF141091">
    <property type="entry name" value="L21p-like"/>
    <property type="match status" value="1"/>
</dbReference>
<feature type="chain" id="PRO_1000067792" description="Large ribosomal subunit protein bL21">
    <location>
        <begin position="1"/>
        <end position="104"/>
    </location>
</feature>
<name>RL21_ACICJ</name>
<proteinExistence type="inferred from homology"/>